<feature type="chain" id="PRO_0000175248" description="Gamma-sarcoglycan">
    <location>
        <begin position="1"/>
        <end position="291"/>
    </location>
</feature>
<feature type="topological domain" description="Cytoplasmic" evidence="2">
    <location>
        <begin position="1"/>
        <end position="37"/>
    </location>
</feature>
<feature type="transmembrane region" description="Helical; Signal-anchor for type II membrane protein" evidence="2">
    <location>
        <begin position="38"/>
        <end position="58"/>
    </location>
</feature>
<feature type="topological domain" description="Extracellular" evidence="2">
    <location>
        <begin position="59"/>
        <end position="291"/>
    </location>
</feature>
<feature type="glycosylation site" description="N-linked (GlcNAc...) asparagine" evidence="2">
    <location>
        <position position="110"/>
    </location>
</feature>
<feature type="disulfide bond" evidence="2">
    <location>
        <begin position="265"/>
        <end position="290"/>
    </location>
</feature>
<feature type="disulfide bond" evidence="2">
    <location>
        <begin position="267"/>
        <end position="283"/>
    </location>
</feature>
<feature type="sequence variant" id="VAR_010430" description="In LGMDR5.">
    <original>G</original>
    <variation>D</variation>
    <location>
        <position position="69"/>
    </location>
</feature>
<feature type="sequence variant" id="VAR_012202" description="In LGMDR5." evidence="4">
    <original>G</original>
    <variation>R</variation>
    <location>
        <position position="69"/>
    </location>
</feature>
<feature type="sequence variant" id="VAR_081101" description="In LGMDR5; dbSNP:rs143009120." evidence="6">
    <original>L</original>
    <variation>S</variation>
    <location>
        <position position="71"/>
    </location>
</feature>
<feature type="sequence variant" id="VAR_010397" description="In dbSNP:rs17314986." evidence="8">
    <original>R</original>
    <variation>H</variation>
    <location>
        <position position="116"/>
    </location>
</feature>
<feature type="sequence variant" id="VAR_010398" description="In LGMDR5; dbSNP:rs104894422." evidence="9">
    <original>C</original>
    <variation>Y</variation>
    <location>
        <position position="283"/>
    </location>
</feature>
<feature type="sequence variant" id="VAR_010399" description="In dbSNP:rs1800354." evidence="5 7 8">
    <original>N</original>
    <variation>S</variation>
    <location>
        <position position="287"/>
    </location>
</feature>
<name>SGCG_HUMAN</name>
<proteinExistence type="evidence at protein level"/>
<dbReference type="EMBL" id="U34976">
    <property type="protein sequence ID" value="AAC50269.1"/>
    <property type="molecule type" value="mRNA"/>
</dbReference>
<dbReference type="EMBL" id="U63395">
    <property type="protein sequence ID" value="AAD13475.1"/>
    <property type="molecule type" value="Genomic_DNA"/>
</dbReference>
<dbReference type="EMBL" id="U63389">
    <property type="protein sequence ID" value="AAD13475.1"/>
    <property type="status" value="JOINED"/>
    <property type="molecule type" value="Genomic_DNA"/>
</dbReference>
<dbReference type="EMBL" id="U63390">
    <property type="protein sequence ID" value="AAD13475.1"/>
    <property type="status" value="JOINED"/>
    <property type="molecule type" value="Genomic_DNA"/>
</dbReference>
<dbReference type="EMBL" id="U63391">
    <property type="protein sequence ID" value="AAD13475.1"/>
    <property type="status" value="JOINED"/>
    <property type="molecule type" value="Genomic_DNA"/>
</dbReference>
<dbReference type="EMBL" id="U63392">
    <property type="protein sequence ID" value="AAD13475.1"/>
    <property type="status" value="JOINED"/>
    <property type="molecule type" value="Genomic_DNA"/>
</dbReference>
<dbReference type="EMBL" id="U63393">
    <property type="protein sequence ID" value="AAD13475.1"/>
    <property type="status" value="JOINED"/>
    <property type="molecule type" value="Genomic_DNA"/>
</dbReference>
<dbReference type="EMBL" id="U63394">
    <property type="protein sequence ID" value="AAD13475.1"/>
    <property type="status" value="JOINED"/>
    <property type="molecule type" value="Genomic_DNA"/>
</dbReference>
<dbReference type="EMBL" id="AL157766">
    <property type="status" value="NOT_ANNOTATED_CDS"/>
    <property type="molecule type" value="Genomic_DNA"/>
</dbReference>
<dbReference type="EMBL" id="AL356287">
    <property type="status" value="NOT_ANNOTATED_CDS"/>
    <property type="molecule type" value="Genomic_DNA"/>
</dbReference>
<dbReference type="EMBL" id="AL160256">
    <property type="status" value="NOT_ANNOTATED_CDS"/>
    <property type="molecule type" value="Genomic_DNA"/>
</dbReference>
<dbReference type="EMBL" id="BC074777">
    <property type="protein sequence ID" value="AAH74777.1"/>
    <property type="molecule type" value="mRNA"/>
</dbReference>
<dbReference type="EMBL" id="BC074778">
    <property type="protein sequence ID" value="AAH74778.1"/>
    <property type="molecule type" value="mRNA"/>
</dbReference>
<dbReference type="EMBL" id="BC109321">
    <property type="protein sequence ID" value="AAI09322.1"/>
    <property type="molecule type" value="mRNA"/>
</dbReference>
<dbReference type="CCDS" id="CCDS9299.1"/>
<dbReference type="RefSeq" id="NP_000222.2">
    <property type="nucleotide sequence ID" value="NM_000231.3"/>
</dbReference>
<dbReference type="RefSeq" id="NP_001365174.1">
    <property type="nucleotide sequence ID" value="NM_001378245.1"/>
</dbReference>
<dbReference type="RefSeq" id="NP_001365175.1">
    <property type="nucleotide sequence ID" value="NM_001378246.1"/>
</dbReference>
<dbReference type="RefSeq" id="XP_005266562.1">
    <property type="nucleotide sequence ID" value="XM_005266505.2"/>
</dbReference>
<dbReference type="SMR" id="Q13326"/>
<dbReference type="BioGRID" id="112343">
    <property type="interactions" value="18"/>
</dbReference>
<dbReference type="ComplexPortal" id="CPX-2424">
    <property type="entry name" value="Dystrophin glycoprotein complex, skeletal muscle variant"/>
</dbReference>
<dbReference type="ComplexPortal" id="CPX-2443">
    <property type="entry name" value="Dystrophin glycoprotein complex, neuromuscular junction variant"/>
</dbReference>
<dbReference type="ComplexPortal" id="CPX-2454">
    <property type="entry name" value="Dystrophin glycoprotein complex, retinal outer plexiform layer variant"/>
</dbReference>
<dbReference type="ComplexPortal" id="CPX-2455">
    <property type="entry name" value="Dystrophin glycoprotein complex, retinal inner limiting membrane variant"/>
</dbReference>
<dbReference type="CORUM" id="Q13326"/>
<dbReference type="FunCoup" id="Q13326">
    <property type="interactions" value="64"/>
</dbReference>
<dbReference type="IntAct" id="Q13326">
    <property type="interactions" value="18"/>
</dbReference>
<dbReference type="MINT" id="Q13326"/>
<dbReference type="STRING" id="9606.ENSP00000218867"/>
<dbReference type="GlyCosmos" id="Q13326">
    <property type="glycosylation" value="1 site, No reported glycans"/>
</dbReference>
<dbReference type="GlyGen" id="Q13326">
    <property type="glycosylation" value="1 site"/>
</dbReference>
<dbReference type="PhosphoSitePlus" id="Q13326"/>
<dbReference type="SwissPalm" id="Q13326"/>
<dbReference type="BioMuta" id="SGCG"/>
<dbReference type="DMDM" id="313104319"/>
<dbReference type="MassIVE" id="Q13326"/>
<dbReference type="PaxDb" id="9606-ENSP00000218867"/>
<dbReference type="PeptideAtlas" id="Q13326"/>
<dbReference type="ProteomicsDB" id="59316"/>
<dbReference type="Antibodypedia" id="2309">
    <property type="antibodies" value="143 antibodies from 28 providers"/>
</dbReference>
<dbReference type="DNASU" id="6445"/>
<dbReference type="Ensembl" id="ENST00000218867.4">
    <property type="protein sequence ID" value="ENSP00000218867.3"/>
    <property type="gene ID" value="ENSG00000102683.8"/>
</dbReference>
<dbReference type="GeneID" id="6445"/>
<dbReference type="KEGG" id="hsa:6445"/>
<dbReference type="MANE-Select" id="ENST00000218867.4">
    <property type="protein sequence ID" value="ENSP00000218867.3"/>
    <property type="RefSeq nucleotide sequence ID" value="NM_000231.3"/>
    <property type="RefSeq protein sequence ID" value="NP_000222.2"/>
</dbReference>
<dbReference type="UCSC" id="uc001uom.3">
    <property type="organism name" value="human"/>
</dbReference>
<dbReference type="AGR" id="HGNC:10809"/>
<dbReference type="CTD" id="6445"/>
<dbReference type="DisGeNET" id="6445"/>
<dbReference type="GeneCards" id="SGCG"/>
<dbReference type="HGNC" id="HGNC:10809">
    <property type="gene designation" value="SGCG"/>
</dbReference>
<dbReference type="HPA" id="ENSG00000102683">
    <property type="expression patterns" value="Group enriched (heart muscle, skeletal muscle, tongue)"/>
</dbReference>
<dbReference type="MalaCards" id="SGCG"/>
<dbReference type="MIM" id="253700">
    <property type="type" value="phenotype"/>
</dbReference>
<dbReference type="MIM" id="608896">
    <property type="type" value="gene"/>
</dbReference>
<dbReference type="neXtProt" id="NX_Q13326"/>
<dbReference type="OpenTargets" id="ENSG00000102683"/>
<dbReference type="Orphanet" id="353">
    <property type="disease" value="Gamma-sarcoglycan-related limb-girdle muscular dystrophy R5"/>
</dbReference>
<dbReference type="PharmGKB" id="PA35720"/>
<dbReference type="VEuPathDB" id="HostDB:ENSG00000102683"/>
<dbReference type="eggNOG" id="KOG3950">
    <property type="taxonomic scope" value="Eukaryota"/>
</dbReference>
<dbReference type="GeneTree" id="ENSGT00940000159187"/>
<dbReference type="HOGENOM" id="CLU_043450_0_0_1"/>
<dbReference type="InParanoid" id="Q13326"/>
<dbReference type="OMA" id="VMWFSPV"/>
<dbReference type="OrthoDB" id="5973998at2759"/>
<dbReference type="PAN-GO" id="Q13326">
    <property type="GO annotations" value="4 GO annotations based on evolutionary models"/>
</dbReference>
<dbReference type="PhylomeDB" id="Q13326"/>
<dbReference type="TreeFam" id="TF313538"/>
<dbReference type="PathwayCommons" id="Q13326"/>
<dbReference type="Reactome" id="R-HSA-9913351">
    <property type="pathway name" value="Formation of the dystrophin-glycoprotein complex (DGC)"/>
</dbReference>
<dbReference type="SignaLink" id="Q13326"/>
<dbReference type="SIGNOR" id="Q13326"/>
<dbReference type="BioGRID-ORCS" id="6445">
    <property type="hits" value="11 hits in 1148 CRISPR screens"/>
</dbReference>
<dbReference type="ChiTaRS" id="SGCG">
    <property type="organism name" value="human"/>
</dbReference>
<dbReference type="GeneWiki" id="SGCG"/>
<dbReference type="GenomeRNAi" id="6445"/>
<dbReference type="Pharos" id="Q13326">
    <property type="development level" value="Tbio"/>
</dbReference>
<dbReference type="PRO" id="PR:Q13326"/>
<dbReference type="Proteomes" id="UP000005640">
    <property type="component" value="Chromosome 13"/>
</dbReference>
<dbReference type="RNAct" id="Q13326">
    <property type="molecule type" value="protein"/>
</dbReference>
<dbReference type="Bgee" id="ENSG00000102683">
    <property type="expression patterns" value="Expressed in skeletal muscle tissue of rectus abdominis and 121 other cell types or tissues"/>
</dbReference>
<dbReference type="GO" id="GO:0005856">
    <property type="term" value="C:cytoskeleton"/>
    <property type="evidence" value="ECO:0007669"/>
    <property type="project" value="UniProtKB-SubCell"/>
</dbReference>
<dbReference type="GO" id="GO:0005789">
    <property type="term" value="C:endoplasmic reticulum membrane"/>
    <property type="evidence" value="ECO:0000304"/>
    <property type="project" value="Reactome"/>
</dbReference>
<dbReference type="GO" id="GO:0005886">
    <property type="term" value="C:plasma membrane"/>
    <property type="evidence" value="ECO:0000304"/>
    <property type="project" value="Reactome"/>
</dbReference>
<dbReference type="GO" id="GO:0016012">
    <property type="term" value="C:sarcoglycan complex"/>
    <property type="evidence" value="ECO:0000318"/>
    <property type="project" value="GO_Central"/>
</dbReference>
<dbReference type="GO" id="GO:0042383">
    <property type="term" value="C:sarcolemma"/>
    <property type="evidence" value="ECO:0000318"/>
    <property type="project" value="GO_Central"/>
</dbReference>
<dbReference type="GO" id="GO:0048738">
    <property type="term" value="P:cardiac muscle tissue development"/>
    <property type="evidence" value="ECO:0000318"/>
    <property type="project" value="GO_Central"/>
</dbReference>
<dbReference type="GO" id="GO:0010467">
    <property type="term" value="P:gene expression"/>
    <property type="evidence" value="ECO:0007669"/>
    <property type="project" value="Ensembl"/>
</dbReference>
<dbReference type="GO" id="GO:0060047">
    <property type="term" value="P:heart contraction"/>
    <property type="evidence" value="ECO:0000318"/>
    <property type="project" value="GO_Central"/>
</dbReference>
<dbReference type="GO" id="GO:0007517">
    <property type="term" value="P:muscle organ development"/>
    <property type="evidence" value="ECO:0000304"/>
    <property type="project" value="ProtInc"/>
</dbReference>
<dbReference type="InterPro" id="IPR006875">
    <property type="entry name" value="Sarcoglycan"/>
</dbReference>
<dbReference type="InterPro" id="IPR039972">
    <property type="entry name" value="Sarcoglycan_gamma/delta/zeta"/>
</dbReference>
<dbReference type="PANTHER" id="PTHR12939:SF4">
    <property type="entry name" value="GAMMA-SARCOGLYCAN"/>
    <property type="match status" value="1"/>
</dbReference>
<dbReference type="PANTHER" id="PTHR12939">
    <property type="entry name" value="SARCOGLYCAN"/>
    <property type="match status" value="1"/>
</dbReference>
<dbReference type="Pfam" id="PF04790">
    <property type="entry name" value="Sarcoglycan_1"/>
    <property type="match status" value="1"/>
</dbReference>
<protein>
    <recommendedName>
        <fullName>Gamma-sarcoglycan</fullName>
        <shortName>Gamma-SG</shortName>
    </recommendedName>
    <alternativeName>
        <fullName>35 kDa dystrophin-associated glycoprotein</fullName>
        <shortName>35DAG</shortName>
    </alternativeName>
</protein>
<accession>Q13326</accession>
<accession>Q32M32</accession>
<accession>Q5T9J6</accession>
<sequence>MVREQYTTATEGICIERPENQYVYKIGIYGWRKRCLYLFVLLLLIILVVNLALTIWILKVMWFSPAGMGHLCVTKDGLRLEGESEFLFPLYAKEIHSRVDSSLLLQSTQNVTVNARNSEGEVTGRLKVGPKMVEVQNQQFQINSNDGKPLFTVDEKEVVVGTDKLRVTGPEGALFEHSVETPLVRADPFQDLRLESPTRSLSMDAPRGVHIQAHAGKIEALSQMDILFHSSDGMLVLDAETVCLPKLVQGTWGPSGSSQSLYEICVCPDGKLYLSVAGVSTTCQEHNHICL</sequence>
<gene>
    <name type="primary">SGCG</name>
</gene>
<reference key="1">
    <citation type="journal article" date="1995" name="Science">
        <title>Mutations in the dystrophin-associated protein gamma-sarcoglycan in chromosome 13 muscular dystrophy.</title>
        <authorList>
            <person name="Noguchi S."/>
            <person name="McNally E.M."/>
            <person name="Othmane K.B."/>
            <person name="Hagiwara Y."/>
            <person name="Mizuno Y."/>
            <person name="Yoshida M."/>
            <person name="Yamamoto H."/>
            <person name="Boennemann C.G."/>
            <person name="Gussoni E."/>
            <person name="Denton P.H."/>
            <person name="Kyriakides T."/>
            <person name="Middleton L."/>
            <person name="Hentati F."/>
            <person name="Hamida M.B."/>
            <person name="Nonaka I."/>
            <person name="Vance J.M."/>
            <person name="Kunkel L.M."/>
            <person name="Ozawa E."/>
        </authorList>
    </citation>
    <scope>NUCLEOTIDE SEQUENCE [MRNA]</scope>
    <scope>DISEASE</scope>
    <scope>VARIANT SER-287</scope>
</reference>
<reference key="2">
    <citation type="journal article" date="1996" name="Am. J. Hum. Genet.">
        <title>Mild and severe muscular dystrophy caused by a single gamma-sarcoglycan mutation.</title>
        <authorList>
            <person name="McNally E.M."/>
            <person name="Passos-Bueno M.R."/>
            <person name="Boennemann C.G."/>
            <person name="Vainzof M."/>
            <person name="de Sa Moreira E."/>
            <person name="Lidov H.G.W."/>
            <person name="Othmane K.B."/>
            <person name="Denton P.H."/>
            <person name="Vance J.M."/>
            <person name="Zatz M."/>
            <person name="Kunkel L.M."/>
        </authorList>
    </citation>
    <scope>NUCLEOTIDE SEQUENCE [GENOMIC DNA]</scope>
    <scope>DISEASE</scope>
    <scope>VARIANTS HIS-116 AND SER-287</scope>
</reference>
<reference key="3">
    <citation type="journal article" date="2004" name="Nature">
        <title>The DNA sequence and analysis of human chromosome 13.</title>
        <authorList>
            <person name="Dunham A."/>
            <person name="Matthews L.H."/>
            <person name="Burton J."/>
            <person name="Ashurst J.L."/>
            <person name="Howe K.L."/>
            <person name="Ashcroft K.J."/>
            <person name="Beare D.M."/>
            <person name="Burford D.C."/>
            <person name="Hunt S.E."/>
            <person name="Griffiths-Jones S."/>
            <person name="Jones M.C."/>
            <person name="Keenan S.J."/>
            <person name="Oliver K."/>
            <person name="Scott C.E."/>
            <person name="Ainscough R."/>
            <person name="Almeida J.P."/>
            <person name="Ambrose K.D."/>
            <person name="Andrews D.T."/>
            <person name="Ashwell R.I.S."/>
            <person name="Babbage A.K."/>
            <person name="Bagguley C.L."/>
            <person name="Bailey J."/>
            <person name="Bannerjee R."/>
            <person name="Barlow K.F."/>
            <person name="Bates K."/>
            <person name="Beasley H."/>
            <person name="Bird C.P."/>
            <person name="Bray-Allen S."/>
            <person name="Brown A.J."/>
            <person name="Brown J.Y."/>
            <person name="Burrill W."/>
            <person name="Carder C."/>
            <person name="Carter N.P."/>
            <person name="Chapman J.C."/>
            <person name="Clamp M.E."/>
            <person name="Clark S.Y."/>
            <person name="Clarke G."/>
            <person name="Clee C.M."/>
            <person name="Clegg S.C."/>
            <person name="Cobley V."/>
            <person name="Collins J.E."/>
            <person name="Corby N."/>
            <person name="Coville G.J."/>
            <person name="Deloukas P."/>
            <person name="Dhami P."/>
            <person name="Dunham I."/>
            <person name="Dunn M."/>
            <person name="Earthrowl M.E."/>
            <person name="Ellington A.G."/>
            <person name="Faulkner L."/>
            <person name="Frankish A.G."/>
            <person name="Frankland J."/>
            <person name="French L."/>
            <person name="Garner P."/>
            <person name="Garnett J."/>
            <person name="Gilbert J.G.R."/>
            <person name="Gilson C.J."/>
            <person name="Ghori J."/>
            <person name="Grafham D.V."/>
            <person name="Gribble S.M."/>
            <person name="Griffiths C."/>
            <person name="Hall R.E."/>
            <person name="Hammond S."/>
            <person name="Harley J.L."/>
            <person name="Hart E.A."/>
            <person name="Heath P.D."/>
            <person name="Howden P.J."/>
            <person name="Huckle E.J."/>
            <person name="Hunt P.J."/>
            <person name="Hunt A.R."/>
            <person name="Johnson C."/>
            <person name="Johnson D."/>
            <person name="Kay M."/>
            <person name="Kimberley A.M."/>
            <person name="King A."/>
            <person name="Laird G.K."/>
            <person name="Langford C.J."/>
            <person name="Lawlor S."/>
            <person name="Leongamornlert D.A."/>
            <person name="Lloyd D.M."/>
            <person name="Lloyd C."/>
            <person name="Loveland J.E."/>
            <person name="Lovell J."/>
            <person name="Martin S."/>
            <person name="Mashreghi-Mohammadi M."/>
            <person name="McLaren S.J."/>
            <person name="McMurray A."/>
            <person name="Milne S."/>
            <person name="Moore M.J.F."/>
            <person name="Nickerson T."/>
            <person name="Palmer S.A."/>
            <person name="Pearce A.V."/>
            <person name="Peck A.I."/>
            <person name="Pelan S."/>
            <person name="Phillimore B."/>
            <person name="Porter K.M."/>
            <person name="Rice C.M."/>
            <person name="Searle S."/>
            <person name="Sehra H.K."/>
            <person name="Shownkeen R."/>
            <person name="Skuce C.D."/>
            <person name="Smith M."/>
            <person name="Steward C.A."/>
            <person name="Sycamore N."/>
            <person name="Tester J."/>
            <person name="Thomas D.W."/>
            <person name="Tracey A."/>
            <person name="Tromans A."/>
            <person name="Tubby B."/>
            <person name="Wall M."/>
            <person name="Wallis J.M."/>
            <person name="West A.P."/>
            <person name="Whitehead S.L."/>
            <person name="Willey D.L."/>
            <person name="Wilming L."/>
            <person name="Wray P.W."/>
            <person name="Wright M.W."/>
            <person name="Young L."/>
            <person name="Coulson A."/>
            <person name="Durbin R.M."/>
            <person name="Hubbard T."/>
            <person name="Sulston J.E."/>
            <person name="Beck S."/>
            <person name="Bentley D.R."/>
            <person name="Rogers J."/>
            <person name="Ross M.T."/>
        </authorList>
    </citation>
    <scope>NUCLEOTIDE SEQUENCE [LARGE SCALE GENOMIC DNA]</scope>
</reference>
<reference key="4">
    <citation type="journal article" date="2004" name="Genome Res.">
        <title>The status, quality, and expansion of the NIH full-length cDNA project: the Mammalian Gene Collection (MGC).</title>
        <authorList>
            <consortium name="The MGC Project Team"/>
        </authorList>
    </citation>
    <scope>NUCLEOTIDE SEQUENCE [LARGE SCALE MRNA]</scope>
    <scope>VARIANT SER-287</scope>
</reference>
<reference key="5">
    <citation type="journal article" date="2000" name="J. Cell Biol.">
        <title>Filamin 2 (FLN2): a muscle-specific sarcoglycan interacting protein.</title>
        <authorList>
            <person name="Thompson T.G."/>
            <person name="Chan Y.-M."/>
            <person name="Hack A.A."/>
            <person name="Brosius M."/>
            <person name="Rajala M."/>
            <person name="Lidov H.G.W."/>
            <person name="McNally E.M."/>
            <person name="Watkins S."/>
            <person name="Kunkel L.M."/>
        </authorList>
    </citation>
    <scope>INTERACTION WITH FLNC</scope>
</reference>
<reference key="6">
    <citation type="journal article" date="1996" name="Hum. Mol. Genet.">
        <title>A founder mutation in the gamma-sarcoglycan gene of Gypsies possibly predating their migration out of India.</title>
        <authorList>
            <person name="Piccolo F."/>
            <person name="Jeanpierre M."/>
            <person name="Leturcq F."/>
            <person name="Dode C."/>
            <person name="Azibi K."/>
            <person name="Toutain A."/>
            <person name="Merlini L."/>
            <person name="Jarre L."/>
            <person name="Navarro C."/>
            <person name="Krishnamoorthy R."/>
            <person name="Tome F.M.S."/>
            <person name="Urtizberea J.A."/>
            <person name="Beckmann J.S."/>
            <person name="Campbell K.P."/>
            <person name="Kaplan J.-C."/>
        </authorList>
    </citation>
    <scope>VARIANT LGMDR5 TYR-283</scope>
</reference>
<reference key="7">
    <citation type="journal article" date="2000" name="Neuromuscul. Disord.">
        <title>Severe gamma-sarcoglycanopathy caused by a novel missense mutation and a large deletion.</title>
        <authorList>
            <person name="Nowak K.J."/>
            <person name="Walsh P."/>
            <person name="Jacob R.L."/>
            <person name="Johnsen R.D."/>
            <person name="Peverall J."/>
            <person name="McNally E.M."/>
            <person name="Wilton S.D."/>
            <person name="Kakulas B.A."/>
            <person name="Laing N.G."/>
        </authorList>
    </citation>
    <scope>VARIANT LGMDR5 ARG-69</scope>
</reference>
<reference key="8">
    <citation type="journal article" date="2018" name="Physiol. Genomics">
        <title>The impact of PYROXD1 deficiency on cellular respiration and correlations with genetic analyses of limb-girdle muscular dystrophy in Saudi Arabia and Sudan.</title>
        <authorList>
            <person name="Saha M."/>
            <person name="Reddy H.M."/>
            <person name="Salih M."/>
            <person name="Estrella E."/>
            <person name="Jones M.D."/>
            <person name="Mitsuhashi S."/>
            <person name="Cho K.A."/>
            <person name="Suzuki-Hatano S."/>
            <person name="Rizzo S.A."/>
            <person name="Hamad M.H."/>
            <person name="Mukhtar M.M."/>
            <person name="Hamed A.A."/>
            <person name="Elseed M.A."/>
            <person name="Lek M."/>
            <person name="Valkanas E."/>
            <person name="MacArthur D.G."/>
            <person name="Kunkel L.M."/>
            <person name="Pacak C.A."/>
            <person name="Draper I."/>
            <person name="Kang P.B."/>
        </authorList>
    </citation>
    <scope>VARIANT LGMDR5 SER-71</scope>
</reference>
<keyword id="KW-1003">Cell membrane</keyword>
<keyword id="KW-0963">Cytoplasm</keyword>
<keyword id="KW-0206">Cytoskeleton</keyword>
<keyword id="KW-0225">Disease variant</keyword>
<keyword id="KW-1015">Disulfide bond</keyword>
<keyword id="KW-0325">Glycoprotein</keyword>
<keyword id="KW-0947">Limb-girdle muscular dystrophy</keyword>
<keyword id="KW-0472">Membrane</keyword>
<keyword id="KW-1267">Proteomics identification</keyword>
<keyword id="KW-1185">Reference proteome</keyword>
<keyword id="KW-0735">Signal-anchor</keyword>
<keyword id="KW-0812">Transmembrane</keyword>
<keyword id="KW-1133">Transmembrane helix</keyword>
<evidence type="ECO:0000250" key="1"/>
<evidence type="ECO:0000255" key="2"/>
<evidence type="ECO:0000269" key="3">
    <source>
    </source>
</evidence>
<evidence type="ECO:0000269" key="4">
    <source>
    </source>
</evidence>
<evidence type="ECO:0000269" key="5">
    <source>
    </source>
</evidence>
<evidence type="ECO:0000269" key="6">
    <source>
    </source>
</evidence>
<evidence type="ECO:0000269" key="7">
    <source>
    </source>
</evidence>
<evidence type="ECO:0000269" key="8">
    <source>
    </source>
</evidence>
<evidence type="ECO:0000269" key="9">
    <source>
    </source>
</evidence>
<evidence type="ECO:0000305" key="10"/>
<comment type="function">
    <text>Component of the sarcoglycan complex, a subcomplex of the dystrophin-glycoprotein complex which forms a link between the F-actin cytoskeleton and the extracellular matrix.</text>
</comment>
<comment type="subunit">
    <text evidence="1 3">Interacts with the syntrophin SNTA1. Cross-link to form 2 major subcomplexes: one consisting of SGCB, SGCD and SGCG and the other consisting of SGCB and SGCD. The association between SGCB and SGCG is particularly strong while SGCA is loosely associated with the other sarcoglycans (By similarity). Interacts with FLNC.</text>
</comment>
<comment type="interaction">
    <interactant intactId="EBI-5357343">
        <id>Q13326</id>
    </interactant>
    <interactant intactId="EBI-18400628">
        <id>O00501</id>
        <label>CLDN5</label>
    </interactant>
    <organismsDiffer>false</organismsDiffer>
    <experiments>3</experiments>
</comment>
<comment type="interaction">
    <interactant intactId="EBI-5357343">
        <id>Q13326</id>
    </interactant>
    <interactant intactId="EBI-2799016">
        <id>O75923</id>
        <label>DYSF</label>
    </interactant>
    <organismsDiffer>false</organismsDiffer>
    <experiments>3</experiments>
</comment>
<comment type="interaction">
    <interactant intactId="EBI-5357343">
        <id>Q13326</id>
    </interactant>
    <interactant intactId="EBI-17498703">
        <id>Q9HBV2</id>
        <label>SPACA1</label>
    </interactant>
    <organismsDiffer>false</organismsDiffer>
    <experiments>3</experiments>
</comment>
<comment type="subcellular location">
    <subcellularLocation>
        <location evidence="1">Cell membrane</location>
        <location evidence="1">Sarcolemma</location>
        <topology evidence="1">Single-pass type II membrane protein</topology>
    </subcellularLocation>
    <subcellularLocation>
        <location evidence="1">Cytoplasm</location>
        <location evidence="1">Cytoskeleton</location>
    </subcellularLocation>
</comment>
<comment type="tissue specificity">
    <text>Expressed in skeletal and heart muscle.</text>
</comment>
<comment type="disease" evidence="4 6 9">
    <disease id="DI-00660">
        <name>Muscular dystrophy, limb-girdle, autosomal recessive 5</name>
        <acronym>LGMDR5</acronym>
        <description>An autosomal recessive degenerative myopathy characterized by rapidly progressive muscle wasting from early childhood with loss of independent ambulation around age 12 years, dystrophic pattern on muscle biopsy, absence of gamma-sarcoglycan and normal dystrophin immunostaining.</description>
        <dbReference type="MIM" id="253700"/>
    </disease>
    <text>The disease is caused by variants affecting the gene represented in this entry.</text>
</comment>
<comment type="similarity">
    <text evidence="10">Belongs to the sarcoglycan beta/delta/gamma/zeta family.</text>
</comment>
<comment type="online information" name="Leiden Muscular Dystrophy pages">
    <link uri="https://www.dmd.nl/sgcg_home.html"/>
    <text>SGCG mutations in LGMD2C</text>
</comment>
<organism>
    <name type="scientific">Homo sapiens</name>
    <name type="common">Human</name>
    <dbReference type="NCBI Taxonomy" id="9606"/>
    <lineage>
        <taxon>Eukaryota</taxon>
        <taxon>Metazoa</taxon>
        <taxon>Chordata</taxon>
        <taxon>Craniata</taxon>
        <taxon>Vertebrata</taxon>
        <taxon>Euteleostomi</taxon>
        <taxon>Mammalia</taxon>
        <taxon>Eutheria</taxon>
        <taxon>Euarchontoglires</taxon>
        <taxon>Primates</taxon>
        <taxon>Haplorrhini</taxon>
        <taxon>Catarrhini</taxon>
        <taxon>Hominidae</taxon>
        <taxon>Homo</taxon>
    </lineage>
</organism>